<proteinExistence type="inferred from homology"/>
<feature type="chain" id="PRO_1000196151" description="Large ribosomal subunit protein bL36">
    <location>
        <begin position="1"/>
        <end position="37"/>
    </location>
</feature>
<protein>
    <recommendedName>
        <fullName evidence="1">Large ribosomal subunit protein bL36</fullName>
    </recommendedName>
    <alternativeName>
        <fullName evidence="2">50S ribosomal protein L36</fullName>
    </alternativeName>
</protein>
<dbReference type="EMBL" id="CP001219">
    <property type="protein sequence ID" value="ACK78240.1"/>
    <property type="molecule type" value="Genomic_DNA"/>
</dbReference>
<dbReference type="RefSeq" id="WP_009568281.1">
    <property type="nucleotide sequence ID" value="NC_011761.1"/>
</dbReference>
<dbReference type="SMR" id="B7J4A0"/>
<dbReference type="STRING" id="243159.AFE_0350"/>
<dbReference type="PaxDb" id="243159-AFE_0350"/>
<dbReference type="GeneID" id="89663770"/>
<dbReference type="KEGG" id="afr:AFE_0350"/>
<dbReference type="eggNOG" id="COG0257">
    <property type="taxonomic scope" value="Bacteria"/>
</dbReference>
<dbReference type="HOGENOM" id="CLU_135723_6_2_6"/>
<dbReference type="Proteomes" id="UP000001362">
    <property type="component" value="Chromosome"/>
</dbReference>
<dbReference type="GO" id="GO:0005737">
    <property type="term" value="C:cytoplasm"/>
    <property type="evidence" value="ECO:0007669"/>
    <property type="project" value="UniProtKB-ARBA"/>
</dbReference>
<dbReference type="GO" id="GO:1990904">
    <property type="term" value="C:ribonucleoprotein complex"/>
    <property type="evidence" value="ECO:0007669"/>
    <property type="project" value="UniProtKB-KW"/>
</dbReference>
<dbReference type="GO" id="GO:0005840">
    <property type="term" value="C:ribosome"/>
    <property type="evidence" value="ECO:0007669"/>
    <property type="project" value="UniProtKB-KW"/>
</dbReference>
<dbReference type="GO" id="GO:0003735">
    <property type="term" value="F:structural constituent of ribosome"/>
    <property type="evidence" value="ECO:0007669"/>
    <property type="project" value="InterPro"/>
</dbReference>
<dbReference type="GO" id="GO:0006412">
    <property type="term" value="P:translation"/>
    <property type="evidence" value="ECO:0007669"/>
    <property type="project" value="UniProtKB-UniRule"/>
</dbReference>
<dbReference type="HAMAP" id="MF_00251">
    <property type="entry name" value="Ribosomal_bL36"/>
    <property type="match status" value="1"/>
</dbReference>
<dbReference type="InterPro" id="IPR000473">
    <property type="entry name" value="Ribosomal_bL36"/>
</dbReference>
<dbReference type="InterPro" id="IPR035977">
    <property type="entry name" value="Ribosomal_bL36_sp"/>
</dbReference>
<dbReference type="NCBIfam" id="TIGR01022">
    <property type="entry name" value="rpmJ_bact"/>
    <property type="match status" value="1"/>
</dbReference>
<dbReference type="PANTHER" id="PTHR42888">
    <property type="entry name" value="50S RIBOSOMAL PROTEIN L36, CHLOROPLASTIC"/>
    <property type="match status" value="1"/>
</dbReference>
<dbReference type="PANTHER" id="PTHR42888:SF1">
    <property type="entry name" value="LARGE RIBOSOMAL SUBUNIT PROTEIN BL36C"/>
    <property type="match status" value="1"/>
</dbReference>
<dbReference type="Pfam" id="PF00444">
    <property type="entry name" value="Ribosomal_L36"/>
    <property type="match status" value="1"/>
</dbReference>
<dbReference type="SUPFAM" id="SSF57840">
    <property type="entry name" value="Ribosomal protein L36"/>
    <property type="match status" value="1"/>
</dbReference>
<dbReference type="PROSITE" id="PS00828">
    <property type="entry name" value="RIBOSOMAL_L36"/>
    <property type="match status" value="1"/>
</dbReference>
<reference key="1">
    <citation type="journal article" date="2008" name="BMC Genomics">
        <title>Acidithiobacillus ferrooxidans metabolism: from genome sequence to industrial applications.</title>
        <authorList>
            <person name="Valdes J."/>
            <person name="Pedroso I."/>
            <person name="Quatrini R."/>
            <person name="Dodson R.J."/>
            <person name="Tettelin H."/>
            <person name="Blake R. II"/>
            <person name="Eisen J.A."/>
            <person name="Holmes D.S."/>
        </authorList>
    </citation>
    <scope>NUCLEOTIDE SEQUENCE [LARGE SCALE GENOMIC DNA]</scope>
    <source>
        <strain>ATCC 23270 / DSM 14882 / CIP 104768 / NCIMB 8455</strain>
    </source>
</reference>
<name>RL36_ACIF2</name>
<evidence type="ECO:0000255" key="1">
    <source>
        <dbReference type="HAMAP-Rule" id="MF_00251"/>
    </source>
</evidence>
<evidence type="ECO:0000305" key="2"/>
<gene>
    <name evidence="1" type="primary">rpmJ</name>
    <name type="ordered locus">AFE_0350</name>
</gene>
<sequence length="37" mass="4346">MKVRASVKKLCRNCKIVRRNGVVRVICVEPRHKQRQG</sequence>
<keyword id="KW-1185">Reference proteome</keyword>
<keyword id="KW-0687">Ribonucleoprotein</keyword>
<keyword id="KW-0689">Ribosomal protein</keyword>
<accession>B7J4A0</accession>
<comment type="similarity">
    <text evidence="1">Belongs to the bacterial ribosomal protein bL36 family.</text>
</comment>
<organism>
    <name type="scientific">Acidithiobacillus ferrooxidans (strain ATCC 23270 / DSM 14882 / CIP 104768 / NCIMB 8455)</name>
    <name type="common">Ferrobacillus ferrooxidans (strain ATCC 23270)</name>
    <dbReference type="NCBI Taxonomy" id="243159"/>
    <lineage>
        <taxon>Bacteria</taxon>
        <taxon>Pseudomonadati</taxon>
        <taxon>Pseudomonadota</taxon>
        <taxon>Acidithiobacillia</taxon>
        <taxon>Acidithiobacillales</taxon>
        <taxon>Acidithiobacillaceae</taxon>
        <taxon>Acidithiobacillus</taxon>
    </lineage>
</organism>